<proteinExistence type="inferred from homology"/>
<keyword id="KW-0378">Hydrolase</keyword>
<keyword id="KW-0479">Metal-binding</keyword>
<keyword id="KW-0482">Metalloprotease</keyword>
<keyword id="KW-0496">Mitochondrion</keyword>
<keyword id="KW-0645">Protease</keyword>
<keyword id="KW-1185">Reference proteome</keyword>
<keyword id="KW-0809">Transit peptide</keyword>
<keyword id="KW-0862">Zinc</keyword>
<protein>
    <recommendedName>
        <fullName>Mitochondrial intermediate peptidase</fullName>
        <shortName>MIP</shortName>
        <ecNumber>3.4.24.59</ecNumber>
    </recommendedName>
    <alternativeName>
        <fullName>Octapeptidyl aminopeptidase</fullName>
    </alternativeName>
</protein>
<name>PMIP_CANGA</name>
<reference key="1">
    <citation type="journal article" date="2004" name="Nature">
        <title>Genome evolution in yeasts.</title>
        <authorList>
            <person name="Dujon B."/>
            <person name="Sherman D."/>
            <person name="Fischer G."/>
            <person name="Durrens P."/>
            <person name="Casaregola S."/>
            <person name="Lafontaine I."/>
            <person name="de Montigny J."/>
            <person name="Marck C."/>
            <person name="Neuveglise C."/>
            <person name="Talla E."/>
            <person name="Goffard N."/>
            <person name="Frangeul L."/>
            <person name="Aigle M."/>
            <person name="Anthouard V."/>
            <person name="Babour A."/>
            <person name="Barbe V."/>
            <person name="Barnay S."/>
            <person name="Blanchin S."/>
            <person name="Beckerich J.-M."/>
            <person name="Beyne E."/>
            <person name="Bleykasten C."/>
            <person name="Boisrame A."/>
            <person name="Boyer J."/>
            <person name="Cattolico L."/>
            <person name="Confanioleri F."/>
            <person name="de Daruvar A."/>
            <person name="Despons L."/>
            <person name="Fabre E."/>
            <person name="Fairhead C."/>
            <person name="Ferry-Dumazet H."/>
            <person name="Groppi A."/>
            <person name="Hantraye F."/>
            <person name="Hennequin C."/>
            <person name="Jauniaux N."/>
            <person name="Joyet P."/>
            <person name="Kachouri R."/>
            <person name="Kerrest A."/>
            <person name="Koszul R."/>
            <person name="Lemaire M."/>
            <person name="Lesur I."/>
            <person name="Ma L."/>
            <person name="Muller H."/>
            <person name="Nicaud J.-M."/>
            <person name="Nikolski M."/>
            <person name="Oztas S."/>
            <person name="Ozier-Kalogeropoulos O."/>
            <person name="Pellenz S."/>
            <person name="Potier S."/>
            <person name="Richard G.-F."/>
            <person name="Straub M.-L."/>
            <person name="Suleau A."/>
            <person name="Swennen D."/>
            <person name="Tekaia F."/>
            <person name="Wesolowski-Louvel M."/>
            <person name="Westhof E."/>
            <person name="Wirth B."/>
            <person name="Zeniou-Meyer M."/>
            <person name="Zivanovic Y."/>
            <person name="Bolotin-Fukuhara M."/>
            <person name="Thierry A."/>
            <person name="Bouchier C."/>
            <person name="Caudron B."/>
            <person name="Scarpelli C."/>
            <person name="Gaillardin C."/>
            <person name="Weissenbach J."/>
            <person name="Wincker P."/>
            <person name="Souciet J.-L."/>
        </authorList>
    </citation>
    <scope>NUCLEOTIDE SEQUENCE [LARGE SCALE GENOMIC DNA]</scope>
    <source>
        <strain>ATCC 2001 / BCRC 20586 / JCM 3761 / NBRC 0622 / NRRL Y-65 / CBS 138</strain>
    </source>
</reference>
<organism>
    <name type="scientific">Candida glabrata (strain ATCC 2001 / BCRC 20586 / JCM 3761 / NBRC 0622 / NRRL Y-65 / CBS 138)</name>
    <name type="common">Yeast</name>
    <name type="synonym">Nakaseomyces glabratus</name>
    <dbReference type="NCBI Taxonomy" id="284593"/>
    <lineage>
        <taxon>Eukaryota</taxon>
        <taxon>Fungi</taxon>
        <taxon>Dikarya</taxon>
        <taxon>Ascomycota</taxon>
        <taxon>Saccharomycotina</taxon>
        <taxon>Saccharomycetes</taxon>
        <taxon>Saccharomycetales</taxon>
        <taxon>Saccharomycetaceae</taxon>
        <taxon>Nakaseomyces</taxon>
    </lineage>
</organism>
<dbReference type="EC" id="3.4.24.59"/>
<dbReference type="EMBL" id="CR380950">
    <property type="protein sequence ID" value="CAG58417.1"/>
    <property type="molecule type" value="Genomic_DNA"/>
</dbReference>
<dbReference type="RefSeq" id="XP_445506.1">
    <property type="nucleotide sequence ID" value="XM_445506.1"/>
</dbReference>
<dbReference type="SMR" id="Q6FW88"/>
<dbReference type="FunCoup" id="Q6FW88">
    <property type="interactions" value="688"/>
</dbReference>
<dbReference type="STRING" id="284593.Q6FW88"/>
<dbReference type="MEROPS" id="M03.006"/>
<dbReference type="EnsemblFungi" id="CAGL0D02112g-T">
    <property type="protein sequence ID" value="CAGL0D02112g-T-p1"/>
    <property type="gene ID" value="CAGL0D02112g"/>
</dbReference>
<dbReference type="KEGG" id="cgr:2887167"/>
<dbReference type="CGD" id="CAL0128069">
    <property type="gene designation" value="CAGL0D02112g"/>
</dbReference>
<dbReference type="VEuPathDB" id="FungiDB:CAGL0D02112g"/>
<dbReference type="eggNOG" id="KOG2090">
    <property type="taxonomic scope" value="Eukaryota"/>
</dbReference>
<dbReference type="HOGENOM" id="CLU_001805_0_0_1"/>
<dbReference type="InParanoid" id="Q6FW88"/>
<dbReference type="OMA" id="ALMFEYM"/>
<dbReference type="Proteomes" id="UP000002428">
    <property type="component" value="Chromosome D"/>
</dbReference>
<dbReference type="GO" id="GO:0005759">
    <property type="term" value="C:mitochondrial matrix"/>
    <property type="evidence" value="ECO:0007669"/>
    <property type="project" value="UniProtKB-SubCell"/>
</dbReference>
<dbReference type="GO" id="GO:0046872">
    <property type="term" value="F:metal ion binding"/>
    <property type="evidence" value="ECO:0007669"/>
    <property type="project" value="UniProtKB-KW"/>
</dbReference>
<dbReference type="GO" id="GO:0004222">
    <property type="term" value="F:metalloendopeptidase activity"/>
    <property type="evidence" value="ECO:0007669"/>
    <property type="project" value="UniProtKB-EC"/>
</dbReference>
<dbReference type="GO" id="GO:0006879">
    <property type="term" value="P:intracellular iron ion homeostasis"/>
    <property type="evidence" value="ECO:0007669"/>
    <property type="project" value="EnsemblFungi"/>
</dbReference>
<dbReference type="GO" id="GO:0006518">
    <property type="term" value="P:peptide metabolic process"/>
    <property type="evidence" value="ECO:0007669"/>
    <property type="project" value="TreeGrafter"/>
</dbReference>
<dbReference type="GO" id="GO:0006627">
    <property type="term" value="P:protein processing involved in protein targeting to mitochondrion"/>
    <property type="evidence" value="ECO:0007669"/>
    <property type="project" value="EnsemblFungi"/>
</dbReference>
<dbReference type="GO" id="GO:0050821">
    <property type="term" value="P:protein stabilization"/>
    <property type="evidence" value="ECO:0007669"/>
    <property type="project" value="EnsemblFungi"/>
</dbReference>
<dbReference type="CDD" id="cd06457">
    <property type="entry name" value="M3A_MIP"/>
    <property type="match status" value="1"/>
</dbReference>
<dbReference type="FunFam" id="3.40.390.10:FF:000029">
    <property type="entry name" value="Mitochondrial intermediate peptidase 1"/>
    <property type="match status" value="1"/>
</dbReference>
<dbReference type="Gene3D" id="3.40.390.10">
    <property type="entry name" value="Collagenase (Catalytic Domain)"/>
    <property type="match status" value="1"/>
</dbReference>
<dbReference type="Gene3D" id="1.10.1370.10">
    <property type="entry name" value="Neurolysin, domain 3"/>
    <property type="match status" value="1"/>
</dbReference>
<dbReference type="InterPro" id="IPR033851">
    <property type="entry name" value="M3A_MIP"/>
</dbReference>
<dbReference type="InterPro" id="IPR024079">
    <property type="entry name" value="MetalloPept_cat_dom_sf"/>
</dbReference>
<dbReference type="InterPro" id="IPR024077">
    <property type="entry name" value="Neurolysin/TOP_dom2"/>
</dbReference>
<dbReference type="InterPro" id="IPR045090">
    <property type="entry name" value="Pept_M3A_M3B"/>
</dbReference>
<dbReference type="InterPro" id="IPR001567">
    <property type="entry name" value="Pept_M3A_M3B_dom"/>
</dbReference>
<dbReference type="PANTHER" id="PTHR11804:SF79">
    <property type="entry name" value="MITOCHONDRIAL INTERMEDIATE PEPTIDASE"/>
    <property type="match status" value="1"/>
</dbReference>
<dbReference type="PANTHER" id="PTHR11804">
    <property type="entry name" value="PROTEASE M3 THIMET OLIGOPEPTIDASE-RELATED"/>
    <property type="match status" value="1"/>
</dbReference>
<dbReference type="Pfam" id="PF01432">
    <property type="entry name" value="Peptidase_M3"/>
    <property type="match status" value="1"/>
</dbReference>
<dbReference type="SUPFAM" id="SSF55486">
    <property type="entry name" value="Metalloproteases ('zincins'), catalytic domain"/>
    <property type="match status" value="1"/>
</dbReference>
<dbReference type="PROSITE" id="PS00142">
    <property type="entry name" value="ZINC_PROTEASE"/>
    <property type="match status" value="1"/>
</dbReference>
<evidence type="ECO:0000250" key="1"/>
<evidence type="ECO:0000255" key="2"/>
<evidence type="ECO:0000255" key="3">
    <source>
        <dbReference type="PROSITE-ProRule" id="PRU10095"/>
    </source>
</evidence>
<evidence type="ECO:0000305" key="4"/>
<sequence>MLIQKILLNKEISRLPRILSILNYTGLRWLSGSSGRNTTELQRIFDDSKYWQSLSENTTQYTKETGLFKNPYLTSTDGLRQFSHDSLHKAHKLAEILRNSVSKEEKVHYIMNLDQLSDTLCRVIDLCEFLRSAHPDQSYVEAAQMCHEEMFEFMNVLNTDVVLCNKLKEVLEDPEILKVLSEEERKVGEILLDDFEKSGIYMKAGIREQFIELSQQISVIGQEFINNTDYVAKEFIKVKRDEMDKSGISPLLTARLNRDLTGKYYKIPTYGQIPLQILKSCPDEDIRKEVWAALHNCPKAQIQRLNQLVRLRVILSNLLGKQSYSDYQLDNKMAGSPENVKGFIKTLMNVTKPLAARELEFIARDKLNAPDSRHMSDNEILSIVKPWDKNYFSSKYDSDNEMAMIRDEQLRYYFSLGNVINGLSELFKRIYGITLQPSRTENGETWSPDVRRLDVISEEEGLVGVIYCDLFERVGKISNPAHFTVCCSRQVYPDENDFTTIQTGQNSDGTVFQLPVISLVCNFSTVALPNGNRTCFLHMNEIETLFHEMGHAMHSMLGRTRLQNISGTRCATDFVELPSILMEHFARDIRVLRTIGSHYETSEPAPEALLNDYLDKTQFLQHCETYSQAKMAMLDQKLHGSFSLSDIERIDSAKIYQKLETRLQVLADDESNWCGRFGHLFGYGATYYSYLFDRAIASKVWDSLFKDDPFNRTGGEKFKERVLKWGGLKNPWSCIADVLEKPDLAKGGAEAMTYIGDSEDL</sequence>
<gene>
    <name type="primary">OCT1</name>
    <name type="ordered locus">CAGL0D02112g</name>
</gene>
<accession>Q6FW88</accession>
<comment type="function">
    <text evidence="1">Cleaves proteins, imported into the mitochondrion, to their mature size. While most mitochondrial precursor proteins are processed to the mature form in one step by mitochondrial processing peptidase (MPP), the sequential cleavage by MIP of an octapeptide after initial processing by MPP is a required step for a subgroup of nuclear-encoded precursor proteins destined for the matrix or the inner membrane (By similarity).</text>
</comment>
<comment type="catalytic activity">
    <reaction>
        <text>Release of an N-terminal octapeptide as second stage of processing of some proteins imported into the mitochondrion.</text>
        <dbReference type="EC" id="3.4.24.59"/>
    </reaction>
</comment>
<comment type="cofactor">
    <cofactor evidence="1">
        <name>Zn(2+)</name>
        <dbReference type="ChEBI" id="CHEBI:29105"/>
    </cofactor>
    <text evidence="1">Binds 1 zinc ion.</text>
</comment>
<comment type="subcellular location">
    <subcellularLocation>
        <location evidence="1">Mitochondrion matrix</location>
    </subcellularLocation>
</comment>
<comment type="similarity">
    <text evidence="4">Belongs to the peptidase M3 family.</text>
</comment>
<feature type="transit peptide" description="Mitochondrion" evidence="2">
    <location>
        <begin position="1"/>
        <end position="37"/>
    </location>
</feature>
<feature type="chain" id="PRO_0000338577" description="Mitochondrial intermediate peptidase">
    <location>
        <begin position="38"/>
        <end position="761"/>
    </location>
</feature>
<feature type="active site" evidence="3">
    <location>
        <position position="548"/>
    </location>
</feature>
<feature type="binding site" evidence="3">
    <location>
        <position position="547"/>
    </location>
    <ligand>
        <name>Zn(2+)</name>
        <dbReference type="ChEBI" id="CHEBI:29105"/>
        <note>catalytic</note>
    </ligand>
</feature>
<feature type="binding site" evidence="3">
    <location>
        <position position="551"/>
    </location>
    <ligand>
        <name>Zn(2+)</name>
        <dbReference type="ChEBI" id="CHEBI:29105"/>
        <note>catalytic</note>
    </ligand>
</feature>
<feature type="binding site" evidence="3">
    <location>
        <position position="554"/>
    </location>
    <ligand>
        <name>Zn(2+)</name>
        <dbReference type="ChEBI" id="CHEBI:29105"/>
        <note>catalytic</note>
    </ligand>
</feature>